<feature type="chain" id="PRO_0000053944" description="Voltage-dependent L-type calcium channel subunit alpha-1S">
    <location>
        <begin position="1"/>
        <end position="1852"/>
    </location>
</feature>
<feature type="topological domain" description="Cytoplasmic" evidence="18">
    <location>
        <begin position="1"/>
        <end position="51"/>
    </location>
</feature>
<feature type="transmembrane region" description="Helical; Name=S1 of repeat I" evidence="2">
    <location>
        <begin position="52"/>
        <end position="70"/>
    </location>
</feature>
<feature type="topological domain" description="Extracellular" evidence="18">
    <location>
        <begin position="71"/>
        <end position="85"/>
    </location>
</feature>
<feature type="transmembrane region" description="Helical; Name=S2 of repeat I" evidence="2">
    <location>
        <begin position="86"/>
        <end position="106"/>
    </location>
</feature>
<feature type="topological domain" description="Cytoplasmic" evidence="18">
    <location>
        <begin position="107"/>
        <end position="115"/>
    </location>
</feature>
<feature type="transmembrane region" description="Helical; Name=S3 of repeat I" evidence="2">
    <location>
        <begin position="116"/>
        <end position="136"/>
    </location>
</feature>
<feature type="topological domain" description="Extracellular" evidence="18">
    <location>
        <begin position="137"/>
        <end position="160"/>
    </location>
</feature>
<feature type="transmembrane region" description="Helical; Name=S4 of repeat I" evidence="2">
    <location>
        <begin position="161"/>
        <end position="179"/>
    </location>
</feature>
<feature type="topological domain" description="Cytoplasmic" evidence="18">
    <location>
        <begin position="180"/>
        <end position="196"/>
    </location>
</feature>
<feature type="transmembrane region" description="Helical; Name=S5 of repeat I" evidence="2">
    <location>
        <begin position="197"/>
        <end position="218"/>
    </location>
</feature>
<feature type="topological domain" description="Extracellular" evidence="18">
    <location>
        <begin position="219"/>
        <end position="279"/>
    </location>
</feature>
<feature type="intramembrane region" description="Pore-forming" evidence="2">
    <location>
        <begin position="280"/>
        <end position="301"/>
    </location>
</feature>
<feature type="topological domain" description="Extracellular" evidence="18">
    <location>
        <begin position="302"/>
        <end position="309"/>
    </location>
</feature>
<feature type="transmembrane region" description="Helical; Name=S6 of repeat I" evidence="2">
    <location>
        <begin position="310"/>
        <end position="330"/>
    </location>
</feature>
<feature type="topological domain" description="Cytoplasmic" evidence="18">
    <location>
        <begin position="331"/>
        <end position="432"/>
    </location>
</feature>
<feature type="transmembrane region" description="Helical; Name=S1 of repeat II" evidence="2">
    <location>
        <begin position="433"/>
        <end position="451"/>
    </location>
</feature>
<feature type="topological domain" description="Extracellular" evidence="18">
    <location>
        <begin position="452"/>
        <end position="462"/>
    </location>
</feature>
<feature type="transmembrane region" description="Helical; Name=S2 of repeat II" evidence="2">
    <location>
        <begin position="463"/>
        <end position="483"/>
    </location>
</feature>
<feature type="topological domain" description="Cytoplasmic" evidence="18">
    <location>
        <begin position="484"/>
        <end position="494"/>
    </location>
</feature>
<feature type="transmembrane region" description="Helical; Name=S3 of repeat II" evidence="2">
    <location>
        <begin position="495"/>
        <end position="514"/>
    </location>
</feature>
<feature type="topological domain" description="Extracellular" evidence="18">
    <location>
        <begin position="515"/>
        <end position="523"/>
    </location>
</feature>
<feature type="transmembrane region" description="Helical; Name=S4 of repeat II" evidence="2">
    <location>
        <begin position="524"/>
        <end position="542"/>
    </location>
</feature>
<feature type="topological domain" description="Cytoplasmic" evidence="18">
    <location>
        <begin position="543"/>
        <end position="561"/>
    </location>
</feature>
<feature type="transmembrane region" description="Helical; Name=S5 of repeat II" evidence="2">
    <location>
        <begin position="562"/>
        <end position="581"/>
    </location>
</feature>
<feature type="topological domain" description="Extracellular" evidence="18">
    <location>
        <begin position="582"/>
        <end position="601"/>
    </location>
</feature>
<feature type="intramembrane region" description="Pore-forming" evidence="2">
    <location>
        <begin position="602"/>
        <end position="623"/>
    </location>
</feature>
<feature type="topological domain" description="Extracellular" evidence="18">
    <location>
        <begin position="624"/>
        <end position="633"/>
    </location>
</feature>
<feature type="transmembrane region" description="Helical; Name=S6 of repeat II" evidence="2">
    <location>
        <begin position="634"/>
        <end position="653"/>
    </location>
</feature>
<feature type="topological domain" description="Cytoplasmic" evidence="18">
    <location>
        <begin position="654"/>
        <end position="799"/>
    </location>
</feature>
<feature type="transmembrane region" description="Helical; Name=S1 of repeat III" evidence="2">
    <location>
        <begin position="800"/>
        <end position="818"/>
    </location>
</feature>
<feature type="topological domain" description="Extracellular" evidence="18">
    <location>
        <begin position="819"/>
        <end position="830"/>
    </location>
</feature>
<feature type="transmembrane region" description="Helical; Name=S2 of repeat III" evidence="2">
    <location>
        <begin position="831"/>
        <end position="850"/>
    </location>
</feature>
<feature type="topological domain" description="Cytoplasmic" evidence="18">
    <location>
        <begin position="851"/>
        <end position="866"/>
    </location>
</feature>
<feature type="transmembrane region" description="Helical; Name=S3 of repeat III" evidence="2">
    <location>
        <begin position="867"/>
        <end position="885"/>
    </location>
</feature>
<feature type="topological domain" description="Extracellular" evidence="18">
    <location>
        <begin position="886"/>
        <end position="892"/>
    </location>
</feature>
<feature type="transmembrane region" description="Helical; Name=S4 of repeat III" evidence="2">
    <location>
        <begin position="893"/>
        <end position="911"/>
    </location>
</feature>
<feature type="topological domain" description="Cytoplasmic" evidence="18">
    <location>
        <begin position="912"/>
        <end position="930"/>
    </location>
</feature>
<feature type="transmembrane region" description="Helical; Name=S5 of repeat III" evidence="2">
    <location>
        <begin position="931"/>
        <end position="950"/>
    </location>
</feature>
<feature type="topological domain" description="Extracellular" evidence="18">
    <location>
        <begin position="951"/>
        <end position="1000"/>
    </location>
</feature>
<feature type="intramembrane region" description="Pore-forming" evidence="2">
    <location>
        <begin position="1001"/>
        <end position="1021"/>
    </location>
</feature>
<feature type="topological domain" description="Extracellular" evidence="18">
    <location>
        <begin position="1022"/>
        <end position="1038"/>
    </location>
</feature>
<feature type="transmembrane region" description="Helical; Name=S6 of repeat III" evidence="2">
    <location>
        <begin position="1039"/>
        <end position="1060"/>
    </location>
</feature>
<feature type="topological domain" description="Cytoplasmic" evidence="18">
    <location>
        <begin position="1061"/>
        <end position="1118"/>
    </location>
</feature>
<feature type="transmembrane region" description="Helical; Name=S1 of repeat IV" evidence="2">
    <location>
        <begin position="1119"/>
        <end position="1140"/>
    </location>
</feature>
<feature type="topological domain" description="Extracellular" evidence="18">
    <location>
        <begin position="1141"/>
        <end position="1148"/>
    </location>
</feature>
<feature type="transmembrane region" description="Helical; Name=S2 of repeat IV" evidence="2">
    <location>
        <begin position="1149"/>
        <end position="1170"/>
    </location>
</feature>
<feature type="topological domain" description="Cytoplasmic" evidence="18">
    <location>
        <begin position="1171"/>
        <end position="1180"/>
    </location>
</feature>
<feature type="transmembrane region" description="Helical; Name=S3 of repeat IV" evidence="2">
    <location>
        <begin position="1181"/>
        <end position="1200"/>
    </location>
</feature>
<feature type="topological domain" description="Extracellular" evidence="18">
    <location>
        <begin position="1201"/>
        <end position="1231"/>
    </location>
</feature>
<feature type="transmembrane region" description="Helical; Name=S4 of repeat IV" evidence="2">
    <location>
        <begin position="1232"/>
        <end position="1250"/>
    </location>
</feature>
<feature type="topological domain" description="Cytoplasmic" evidence="18">
    <location>
        <begin position="1251"/>
        <end position="1268"/>
    </location>
</feature>
<feature type="transmembrane region" description="Helical; Name=S5 of repeat IV" evidence="2">
    <location>
        <begin position="1269"/>
        <end position="1289"/>
    </location>
</feature>
<feature type="topological domain" description="Extracellular" evidence="18">
    <location>
        <begin position="1290"/>
        <end position="1311"/>
    </location>
</feature>
<feature type="intramembrane region" description="Pore-forming" evidence="2">
    <location>
        <begin position="1312"/>
        <end position="1330"/>
    </location>
</feature>
<feature type="topological domain" description="Extracellular" evidence="18">
    <location>
        <begin position="1331"/>
        <end position="1356"/>
    </location>
</feature>
<feature type="transmembrane region" description="Helical; Name=S6 of repeat IV" evidence="2">
    <location>
        <begin position="1357"/>
        <end position="1381"/>
    </location>
</feature>
<feature type="topological domain" description="Cytoplasmic" evidence="18">
    <location>
        <begin position="1382"/>
        <end position="1852"/>
    </location>
</feature>
<feature type="repeat" description="I" evidence="18">
    <location>
        <begin position="38"/>
        <end position="337"/>
    </location>
</feature>
<feature type="repeat" description="II" evidence="18">
    <location>
        <begin position="418"/>
        <end position="664"/>
    </location>
</feature>
<feature type="repeat" description="III" evidence="18">
    <location>
        <begin position="768"/>
        <end position="1068"/>
    </location>
</feature>
<feature type="repeat" description="IV" evidence="18">
    <location>
        <begin position="1105"/>
        <end position="1384"/>
    </location>
</feature>
<feature type="region of interest" description="Disordered" evidence="6">
    <location>
        <begin position="1"/>
        <end position="23"/>
    </location>
</feature>
<feature type="region of interest" description="Binding to the beta subunit" evidence="11">
    <location>
        <begin position="357"/>
        <end position="374"/>
    </location>
</feature>
<feature type="region of interest" description="Disordered" evidence="6">
    <location>
        <begin position="675"/>
        <end position="712"/>
    </location>
</feature>
<feature type="region of interest" description="Disordered" evidence="6">
    <location>
        <begin position="731"/>
        <end position="757"/>
    </location>
</feature>
<feature type="region of interest" description="Dihydropyridine binding" evidence="2">
    <location>
        <begin position="988"/>
        <end position="1077"/>
    </location>
</feature>
<feature type="region of interest" description="Dihydropyridine binding" evidence="2">
    <location>
        <begin position="1337"/>
        <end position="1403"/>
    </location>
</feature>
<feature type="region of interest" description="Phenylalkylamine binding" evidence="1">
    <location>
        <begin position="1349"/>
        <end position="1392"/>
    </location>
</feature>
<feature type="region of interest" description="Phenylalkylamine binding" evidence="2">
    <location>
        <begin position="1349"/>
        <end position="1391"/>
    </location>
</feature>
<feature type="region of interest" description="Interaction with calmodulin" evidence="4">
    <location>
        <begin position="1522"/>
        <end position="1542"/>
    </location>
</feature>
<feature type="region of interest" description="Disordered" evidence="6">
    <location>
        <begin position="1702"/>
        <end position="1721"/>
    </location>
</feature>
<feature type="region of interest" description="Disordered" evidence="6">
    <location>
        <begin position="1727"/>
        <end position="1762"/>
    </location>
</feature>
<feature type="short sequence motif" description="Selectivity filter of repeat I" evidence="2">
    <location>
        <begin position="290"/>
        <end position="293"/>
    </location>
</feature>
<feature type="short sequence motif" description="Selectivity filter of repeat II" evidence="2">
    <location>
        <begin position="612"/>
        <end position="615"/>
    </location>
</feature>
<feature type="short sequence motif" description="Selectivity filter of repeat III" evidence="2">
    <location>
        <begin position="1012"/>
        <end position="1015"/>
    </location>
</feature>
<feature type="short sequence motif" description="Selectivity filter of repeat IV" evidence="2">
    <location>
        <begin position="1321"/>
        <end position="1324"/>
    </location>
</feature>
<feature type="compositionally biased region" description="Basic and acidic residues" evidence="6">
    <location>
        <begin position="690"/>
        <end position="711"/>
    </location>
</feature>
<feature type="compositionally biased region" description="Acidic residues" evidence="6">
    <location>
        <begin position="742"/>
        <end position="751"/>
    </location>
</feature>
<feature type="compositionally biased region" description="Basic and acidic residues" evidence="6">
    <location>
        <begin position="1747"/>
        <end position="1757"/>
    </location>
</feature>
<feature type="binding site" evidence="2">
    <location>
        <position position="292"/>
    </location>
    <ligand>
        <name>Ca(2+)</name>
        <dbReference type="ChEBI" id="CHEBI:29108"/>
    </ligand>
</feature>
<feature type="binding site" evidence="2">
    <location>
        <position position="614"/>
    </location>
    <ligand>
        <name>Ca(2+)</name>
        <dbReference type="ChEBI" id="CHEBI:29108"/>
    </ligand>
</feature>
<feature type="binding site" evidence="2">
    <location>
        <position position="1014"/>
    </location>
    <ligand>
        <name>Ca(2+)</name>
        <dbReference type="ChEBI" id="CHEBI:29108"/>
    </ligand>
</feature>
<feature type="modified residue" description="Phosphoserine" evidence="20">
    <location>
        <position position="393"/>
    </location>
</feature>
<feature type="modified residue" description="Phosphoserine" evidence="20">
    <location>
        <position position="397"/>
    </location>
</feature>
<feature type="modified residue" description="Phosphoserine; by PKA" evidence="2">
    <location>
        <position position="687"/>
    </location>
</feature>
<feature type="modified residue" description="Phosphoserine; by PKA and CAMK2" evidence="2">
    <location>
        <position position="1575"/>
    </location>
</feature>
<feature type="modified residue" description="Phosphothreonine" evidence="3">
    <location>
        <position position="1579"/>
    </location>
</feature>
<feature type="modified residue" description="Phosphoserine; by PKA" evidence="2">
    <location>
        <position position="1617"/>
    </location>
</feature>
<feature type="glycosylation site" description="N-linked (GlcNAc...) asparagine" evidence="5">
    <location>
        <position position="79"/>
    </location>
</feature>
<feature type="glycosylation site" description="N-linked (GlcNAc...) asparagine" evidence="5">
    <location>
        <position position="257"/>
    </location>
</feature>
<feature type="glycosylation site" description="N-linked (GlcNAc...) asparagine" evidence="5">
    <location>
        <position position="1141"/>
    </location>
</feature>
<feature type="disulfide bond" evidence="2">
    <location>
        <begin position="226"/>
        <end position="254"/>
    </location>
</feature>
<feature type="disulfide bond" evidence="2">
    <location>
        <begin position="245"/>
        <end position="261"/>
    </location>
</feature>
<feature type="disulfide bond" evidence="2">
    <location>
        <begin position="957"/>
        <end position="968"/>
    </location>
</feature>
<feature type="disulfide bond" evidence="2">
    <location>
        <begin position="1338"/>
        <end position="1352"/>
    </location>
</feature>
<feature type="splice variant" id="VSP_050420" description="In isoform 2 and isoform 3." evidence="13 14 16">
    <location>
        <begin position="1204"/>
        <end position="1222"/>
    </location>
</feature>
<feature type="splice variant" id="VSP_061231" description="In isoform 3." evidence="14">
    <original>VTGAK</original>
    <variation>LSQ</variation>
    <location>
        <begin position="1743"/>
        <end position="1747"/>
    </location>
</feature>
<feature type="sequence conflict" description="In Ref. 1; AAB59700." evidence="18" ref="1">
    <original>G</original>
    <variation>A</variation>
    <location>
        <position position="1176"/>
    </location>
</feature>
<feature type="helix" evidence="21">
    <location>
        <begin position="358"/>
        <end position="372"/>
    </location>
</feature>
<proteinExistence type="evidence at protein level"/>
<comment type="function">
    <text evidence="2 4">Pore-forming, alpha-1S subunit of the voltage-gated calcium channel that gives rise to L-type calcium currents in skeletal muscle. Calcium channels containing the alpha-1S subunit play an important role in excitation-contraction coupling in skeletal muscle via their interaction with RYR1, which triggers Ca(2+) release from the sarcplasmic reticulum and ultimately results in muscle contraction. Long-lasting (L-type) calcium channels belong to the 'high-voltage activated' (HVA) group.</text>
</comment>
<comment type="catalytic activity">
    <reaction evidence="4">
        <text>Ca(2+)(in) = Ca(2+)(out)</text>
        <dbReference type="Rhea" id="RHEA:29671"/>
        <dbReference type="ChEBI" id="CHEBI:29108"/>
    </reaction>
</comment>
<comment type="activity regulation">
    <text evidence="2">Channel activity is blocked by dihydropyridines (DHP), phenylalkylamines, and by benzothiazepines.</text>
</comment>
<comment type="subunit">
    <text evidence="2 4 8 9 10 11 12">Component of a calcium channel complex consisting of a pore-forming alpha subunit (CACNA1S) and the ancillary subunits CACNB1 or CACNB2, CACNG1 and CACNA2D1 (PubMed:28351836). The channel complex contains alpha, beta, gamma and delta subunits in a 1:1:1:1 ratio, i.e. it contains either CACNB1 or CACNB2 (By similarity). CACNA1S channel activity is modulated by the auxiliary subunits (CACNB1 or CACNB2, CACNG1 and CACNA2D1). Interacts with DYSF and JSRP1 (PubMed:12871958, PubMed:16550931, PubMed:16638807). Interacts with RYR1 (By similarity). Interacts with STAC, STAC2 and STAC3 (via their SH3 domains) (PubMed:29467163). Interacts with CALM (By similarity).</text>
</comment>
<comment type="subcellular location">
    <subcellularLocation>
        <location evidence="2">Cell membrane</location>
        <location evidence="2">Sarcolemma</location>
        <location evidence="2">T-tubule</location>
        <topology evidence="2">Multi-pass membrane protein</topology>
    </subcellularLocation>
</comment>
<comment type="alternative products">
    <event type="alternative splicing"/>
    <isoform>
        <id>Q02789-1</id>
        <name>1</name>
        <sequence type="displayed"/>
    </isoform>
    <isoform>
        <id>Q02789-2</id>
        <name>2</name>
        <sequence type="described" ref="VSP_050420"/>
    </isoform>
    <isoform>
        <id>Q02789-3</id>
        <name>3</name>
        <sequence type="described" ref="VSP_050420 VSP_061231"/>
    </isoform>
</comment>
<comment type="domain">
    <text evidence="2">Each of the four internal repeats contains five hydrophobic transmembrane segments (S1, S2, S3, S5, S6) and one positively charged transmembrane segment (S4). S4 segments probably represent the voltage-sensor and are characterized by a series of positively charged amino acids at every third position.</text>
</comment>
<comment type="domain">
    <text evidence="2">The loop between repeats II and III interacts with the ryanodine receptor, and is therefore important for calcium release from the endoplasmic reticulum necessary for muscle contraction.</text>
</comment>
<comment type="PTM">
    <text evidence="2">The alpha-1S subunit is found in two isoforms in the skeletal muscle: a minor form of 212 kDa containing the complete amino acid sequence, and a major form of 190 kDa derived from the full-length form by post-translational proteolysis close to Phe-1690.</text>
</comment>
<comment type="PTM">
    <text evidence="2">Phosphorylated. Phosphorylation by PKA activates the calcium channel. Both the minor and major forms are phosphorylated in vitro by PKA. Phosphorylation at Ser-1575 is involved in beta-adrenergic-mediated regulation of the channel.</text>
</comment>
<comment type="disease">
    <text evidence="7">Defects in Cacna1s are the cause of muscular dysgenesis (MDG), a lethal autosomal recessive disorder in which there is total lack of excitation-contraction coupling in homozygotes, and which results in complete skeletal muscle paralysis. A single nucleotide deletion yields a protein with an altered and truncated C-terminus.</text>
</comment>
<comment type="similarity">
    <text evidence="18">Belongs to the calcium channel alpha-1 subunit (TC 1.A.1.11) family. CACNA1S subfamily.</text>
</comment>
<accession>Q02789</accession>
<accession>E9Q7B5</accession>
<accession>E9QPX8</accession>
<accession>F8VQE0</accession>
<accession>Q3UPG8</accession>
<accession>Q99240</accession>
<gene>
    <name type="primary">Cacna1s</name>
    <name type="synonym">Cach1</name>
    <name type="synonym">Cach1b</name>
    <name type="synonym">Cacn1</name>
    <name type="synonym">Cacnl1a3</name>
</gene>
<name>CAC1S_MOUSE</name>
<protein>
    <recommendedName>
        <fullName>Voltage-dependent L-type calcium channel subunit alpha-1S</fullName>
    </recommendedName>
    <alternativeName>
        <fullName>Calcium channel, L type, alpha-1 polypeptide, isoform 3, skeletal muscle</fullName>
    </alternativeName>
    <alternativeName>
        <fullName evidence="15 17">Dihydropyridine receptor</fullName>
        <shortName evidence="18">DHPR</shortName>
    </alternativeName>
    <alternativeName>
        <fullName>Voltage-gated calcium channel subunit alpha Cav1.1</fullName>
    </alternativeName>
</protein>
<reference key="1">
    <citation type="journal article" date="1992" name="J. Biol. Chem.">
        <title>A single nucleotide deletion in the skeletal muscle-specific calcium channel transcript of muscular dysgenesis (mdg) mice.</title>
        <authorList>
            <person name="Chaudhari N."/>
        </authorList>
    </citation>
    <scope>NUCLEOTIDE SEQUENCE [MRNA] (ISOFORM 2)</scope>
    <scope>DISEASE</scope>
    <source>
        <strain>129/ReJ</strain>
        <tissue>Fetal skeletal muscle</tissue>
    </source>
</reference>
<reference key="2">
    <citation type="journal article" date="2005" name="Science">
        <title>The transcriptional landscape of the mammalian genome.</title>
        <authorList>
            <person name="Carninci P."/>
            <person name="Kasukawa T."/>
            <person name="Katayama S."/>
            <person name="Gough J."/>
            <person name="Frith M.C."/>
            <person name="Maeda N."/>
            <person name="Oyama R."/>
            <person name="Ravasi T."/>
            <person name="Lenhard B."/>
            <person name="Wells C."/>
            <person name="Kodzius R."/>
            <person name="Shimokawa K."/>
            <person name="Bajic V.B."/>
            <person name="Brenner S.E."/>
            <person name="Batalov S."/>
            <person name="Forrest A.R."/>
            <person name="Zavolan M."/>
            <person name="Davis M.J."/>
            <person name="Wilming L.G."/>
            <person name="Aidinis V."/>
            <person name="Allen J.E."/>
            <person name="Ambesi-Impiombato A."/>
            <person name="Apweiler R."/>
            <person name="Aturaliya R.N."/>
            <person name="Bailey T.L."/>
            <person name="Bansal M."/>
            <person name="Baxter L."/>
            <person name="Beisel K.W."/>
            <person name="Bersano T."/>
            <person name="Bono H."/>
            <person name="Chalk A.M."/>
            <person name="Chiu K.P."/>
            <person name="Choudhary V."/>
            <person name="Christoffels A."/>
            <person name="Clutterbuck D.R."/>
            <person name="Crowe M.L."/>
            <person name="Dalla E."/>
            <person name="Dalrymple B.P."/>
            <person name="de Bono B."/>
            <person name="Della Gatta G."/>
            <person name="di Bernardo D."/>
            <person name="Down T."/>
            <person name="Engstrom P."/>
            <person name="Fagiolini M."/>
            <person name="Faulkner G."/>
            <person name="Fletcher C.F."/>
            <person name="Fukushima T."/>
            <person name="Furuno M."/>
            <person name="Futaki S."/>
            <person name="Gariboldi M."/>
            <person name="Georgii-Hemming P."/>
            <person name="Gingeras T.R."/>
            <person name="Gojobori T."/>
            <person name="Green R.E."/>
            <person name="Gustincich S."/>
            <person name="Harbers M."/>
            <person name="Hayashi Y."/>
            <person name="Hensch T.K."/>
            <person name="Hirokawa N."/>
            <person name="Hill D."/>
            <person name="Huminiecki L."/>
            <person name="Iacono M."/>
            <person name="Ikeo K."/>
            <person name="Iwama A."/>
            <person name="Ishikawa T."/>
            <person name="Jakt M."/>
            <person name="Kanapin A."/>
            <person name="Katoh M."/>
            <person name="Kawasawa Y."/>
            <person name="Kelso J."/>
            <person name="Kitamura H."/>
            <person name="Kitano H."/>
            <person name="Kollias G."/>
            <person name="Krishnan S.P."/>
            <person name="Kruger A."/>
            <person name="Kummerfeld S.K."/>
            <person name="Kurochkin I.V."/>
            <person name="Lareau L.F."/>
            <person name="Lazarevic D."/>
            <person name="Lipovich L."/>
            <person name="Liu J."/>
            <person name="Liuni S."/>
            <person name="McWilliam S."/>
            <person name="Madan Babu M."/>
            <person name="Madera M."/>
            <person name="Marchionni L."/>
            <person name="Matsuda H."/>
            <person name="Matsuzawa S."/>
            <person name="Miki H."/>
            <person name="Mignone F."/>
            <person name="Miyake S."/>
            <person name="Morris K."/>
            <person name="Mottagui-Tabar S."/>
            <person name="Mulder N."/>
            <person name="Nakano N."/>
            <person name="Nakauchi H."/>
            <person name="Ng P."/>
            <person name="Nilsson R."/>
            <person name="Nishiguchi S."/>
            <person name="Nishikawa S."/>
            <person name="Nori F."/>
            <person name="Ohara O."/>
            <person name="Okazaki Y."/>
            <person name="Orlando V."/>
            <person name="Pang K.C."/>
            <person name="Pavan W.J."/>
            <person name="Pavesi G."/>
            <person name="Pesole G."/>
            <person name="Petrovsky N."/>
            <person name="Piazza S."/>
            <person name="Reed J."/>
            <person name="Reid J.F."/>
            <person name="Ring B.Z."/>
            <person name="Ringwald M."/>
            <person name="Rost B."/>
            <person name="Ruan Y."/>
            <person name="Salzberg S.L."/>
            <person name="Sandelin A."/>
            <person name="Schneider C."/>
            <person name="Schoenbach C."/>
            <person name="Sekiguchi K."/>
            <person name="Semple C.A."/>
            <person name="Seno S."/>
            <person name="Sessa L."/>
            <person name="Sheng Y."/>
            <person name="Shibata Y."/>
            <person name="Shimada H."/>
            <person name="Shimada K."/>
            <person name="Silva D."/>
            <person name="Sinclair B."/>
            <person name="Sperling S."/>
            <person name="Stupka E."/>
            <person name="Sugiura K."/>
            <person name="Sultana R."/>
            <person name="Takenaka Y."/>
            <person name="Taki K."/>
            <person name="Tammoja K."/>
            <person name="Tan S.L."/>
            <person name="Tang S."/>
            <person name="Taylor M.S."/>
            <person name="Tegner J."/>
            <person name="Teichmann S.A."/>
            <person name="Ueda H.R."/>
            <person name="van Nimwegen E."/>
            <person name="Verardo R."/>
            <person name="Wei C.L."/>
            <person name="Yagi K."/>
            <person name="Yamanishi H."/>
            <person name="Zabarovsky E."/>
            <person name="Zhu S."/>
            <person name="Zimmer A."/>
            <person name="Hide W."/>
            <person name="Bult C."/>
            <person name="Grimmond S.M."/>
            <person name="Teasdale R.D."/>
            <person name="Liu E.T."/>
            <person name="Brusic V."/>
            <person name="Quackenbush J."/>
            <person name="Wahlestedt C."/>
            <person name="Mattick J.S."/>
            <person name="Hume D.A."/>
            <person name="Kai C."/>
            <person name="Sasaki D."/>
            <person name="Tomaru Y."/>
            <person name="Fukuda S."/>
            <person name="Kanamori-Katayama M."/>
            <person name="Suzuki M."/>
            <person name="Aoki J."/>
            <person name="Arakawa T."/>
            <person name="Iida J."/>
            <person name="Imamura K."/>
            <person name="Itoh M."/>
            <person name="Kato T."/>
            <person name="Kawaji H."/>
            <person name="Kawagashira N."/>
            <person name="Kawashima T."/>
            <person name="Kojima M."/>
            <person name="Kondo S."/>
            <person name="Konno H."/>
            <person name="Nakano K."/>
            <person name="Ninomiya N."/>
            <person name="Nishio T."/>
            <person name="Okada M."/>
            <person name="Plessy C."/>
            <person name="Shibata K."/>
            <person name="Shiraki T."/>
            <person name="Suzuki S."/>
            <person name="Tagami M."/>
            <person name="Waki K."/>
            <person name="Watahiki A."/>
            <person name="Okamura-Oho Y."/>
            <person name="Suzuki H."/>
            <person name="Kawai J."/>
            <person name="Hayashizaki Y."/>
        </authorList>
    </citation>
    <scope>NUCLEOTIDE SEQUENCE [LARGE SCALE MRNA] OF 22-1852 (ISOFORM 3)</scope>
    <source>
        <strain>C57BL/6J</strain>
    </source>
</reference>
<reference key="3">
    <citation type="journal article" date="2009" name="PLoS Biol.">
        <title>Lineage-specific biology revealed by a finished genome assembly of the mouse.</title>
        <authorList>
            <person name="Church D.M."/>
            <person name="Goodstadt L."/>
            <person name="Hillier L.W."/>
            <person name="Zody M.C."/>
            <person name="Goldstein S."/>
            <person name="She X."/>
            <person name="Bult C.J."/>
            <person name="Agarwala R."/>
            <person name="Cherry J.L."/>
            <person name="DiCuccio M."/>
            <person name="Hlavina W."/>
            <person name="Kapustin Y."/>
            <person name="Meric P."/>
            <person name="Maglott D."/>
            <person name="Birtle Z."/>
            <person name="Marques A.C."/>
            <person name="Graves T."/>
            <person name="Zhou S."/>
            <person name="Teague B."/>
            <person name="Potamousis K."/>
            <person name="Churas C."/>
            <person name="Place M."/>
            <person name="Herschleb J."/>
            <person name="Runnheim R."/>
            <person name="Forrest D."/>
            <person name="Amos-Landgraf J."/>
            <person name="Schwartz D.C."/>
            <person name="Cheng Z."/>
            <person name="Lindblad-Toh K."/>
            <person name="Eichler E.E."/>
            <person name="Ponting C.P."/>
        </authorList>
    </citation>
    <scope>NUCLEOTIDE SEQUENCE [LARGE SCALE GENOMIC DNA]</scope>
    <source>
        <strain>C57BL/6J</strain>
    </source>
</reference>
<reference key="4">
    <citation type="journal article" date="1990" name="J. Biol. Chem.">
        <title>Molecular diversity of L-type calcium channels. Evidence for alternative splicing of the transcripts of three non-allelic genes.</title>
        <authorList>
            <person name="Perez-Reyes E."/>
            <person name="Wei X."/>
            <person name="Castellano A."/>
            <person name="Birnbaumer L."/>
        </authorList>
    </citation>
    <scope>NUCLEOTIDE SEQUENCE [MRNA] OF 1061-1360 (ISOFORMS 1 AND 2)</scope>
    <source>
        <strain>ICR</strain>
        <tissue>Ovary</tissue>
    </source>
</reference>
<reference key="5">
    <citation type="journal article" date="2003" name="J. Biol. Chem.">
        <title>The novel skeletal muscle sarcoplasmic reticulum JP-45 protein. Molecular cloning, tissue distribution, developmental expression, and interaction with alpha 1.1 subunit of the voltage-gated calcium channel.</title>
        <authorList>
            <person name="Anderson A.A."/>
            <person name="Treves S."/>
            <person name="Biral D."/>
            <person name="Betto R."/>
            <person name="Sandona D."/>
            <person name="Ronjat M."/>
            <person name="Zorzato F."/>
        </authorList>
    </citation>
    <scope>INTERACTION WITH JSRP1</scope>
</reference>
<reference key="6">
    <citation type="journal article" date="2005" name="Acta Myol.">
        <title>Intracellular localization of dysferlin and its association with the dihydropyridine receptor.</title>
        <authorList>
            <person name="Ampong B.N."/>
            <person name="Imamura M."/>
            <person name="Matsumiya T."/>
            <person name="Yoshida M."/>
            <person name="Takeda S."/>
        </authorList>
    </citation>
    <scope>INTERACTION WITH DYSF</scope>
</reference>
<reference key="7">
    <citation type="journal article" date="2006" name="J. Cell Sci.">
        <title>The junctional SR protein JP-45 affects the functional expression of the voltage-dependent Ca2+ channel Cav1.1.</title>
        <authorList>
            <person name="Anderson A.A."/>
            <person name="Altafaj X."/>
            <person name="Zheng Z."/>
            <person name="Wang Z.-M."/>
            <person name="Delbono O."/>
            <person name="Ronjat M."/>
            <person name="Treves S."/>
            <person name="Zorzato F."/>
        </authorList>
    </citation>
    <scope>INTERACTION WITH JSRP1</scope>
</reference>
<reference key="8">
    <citation type="journal article" date="2010" name="Cell">
        <title>A tissue-specific atlas of mouse protein phosphorylation and expression.</title>
        <authorList>
            <person name="Huttlin E.L."/>
            <person name="Jedrychowski M.P."/>
            <person name="Elias J.E."/>
            <person name="Goswami T."/>
            <person name="Rad R."/>
            <person name="Beausoleil S.A."/>
            <person name="Villen J."/>
            <person name="Haas W."/>
            <person name="Sowa M.E."/>
            <person name="Gygi S.P."/>
        </authorList>
    </citation>
    <scope>PHOSPHORYLATION [LARGE SCALE ANALYSIS] AT SER-393 AND SER-397</scope>
    <scope>IDENTIFICATION BY MASS SPECTROMETRY [LARGE SCALE ANALYSIS]</scope>
    <source>
        <tissue>Brown adipose tissue</tissue>
        <tissue>Lung</tissue>
    </source>
</reference>
<reference key="9">
    <citation type="journal article" date="2018" name="J. Gen. Physiol.">
        <title>STAC proteins associate with the critical domain for excitation-contraction coupling in the II-III loop of CaV1.1.</title>
        <authorList>
            <person name="Polster A."/>
            <person name="Nelson B.R."/>
            <person name="Papadopoulos S."/>
            <person name="Olson E.N."/>
            <person name="Beam K.G."/>
        </authorList>
    </citation>
    <scope>INTERACTION WITH STAC; STAC2 AND STAC3</scope>
</reference>
<reference evidence="19" key="10">
    <citation type="journal article" date="2017" name="J. Biol. Chem.">
        <title>Structural and biophysical analyses of the skeletal dihydropyridine receptor beta subunit beta1a reveal critical roles of domain interactions for stability.</title>
        <authorList>
            <person name="Norris N.C."/>
            <person name="Joseph S."/>
            <person name="Aditya S."/>
            <person name="Karunasekara Y."/>
            <person name="Board P.G."/>
            <person name="Dulhunty A.F."/>
            <person name="Oakley A.J."/>
            <person name="Casarotto M.G."/>
        </authorList>
    </citation>
    <scope>X-RAY CRYSTALLOGRAPHY (1.86 ANGSTROMS) OF 357-374 IN COMPLEX WITH CACNB1</scope>
    <scope>SUBUNIT</scope>
</reference>
<sequence length="1852" mass="210320">MEPPSPQDEGLRKKQPKKPVPEILPRPPRALFCLTLQNPLRKACISIVEWKPFETIILLTIFANCVALAVYLPMPEDDNNTLNLGLEKLEYFFLIVFSIEAAMKIIAYGFLFHQDAYLRSGWNVLDFIIVFLGVFTVILEQVNIIQTNTAPMSSKGAGLDVKALRAFRVLRPLRLVSGVPSLQVVLNSIFKAMLPLFHIALLVLFMVIIYAIIGLELFKGKMHKTCYFIGTDIVATVENEKPSPCARTGSGRPCTINGSECRGGWPGPNHGITHFDNFGFSMLTVYQCISMEGWTDVLYWVNDAIGNEWPWIYFVTLILLGSFFILNLVLGVLSGEFTKEREKAKSRGTFQKLREKQQLEEDLRGYMSWITQGEVMDVDDLREGKLSLDEGGSDTESLYEIEGLNKIIQFIRHWRQWNRVFRWKCHDLVKSKVFYWLVILIVALNTLSIASEHHNQPLWLTHLQDVANRVLLTLFTIEMLMKMYGLGLRQYFMSIFNRFDCFVVCSGILEILLVESGAMSPLGISVLRCIRLLRLFKITKYWTSLSNLVASLLNSIRSIASLLLLLFLFIIIFALLGMQLFGGRYDFEDTEVRRSNFDNFPQALISVFQVLTGEDWNSVMYNGIMAYGGPTYPGVLVCIYFIILFVCGNYILLNVFLAIAVDNLAEAESLTSAQKAKAEERKRRKMSKGLPDKSEEERATVTKKLEQKSKGEGIPTTAKLKIDEFESNVNEVKDPYPSADFPGDDEEDEPEIPVSPRPRPLAELQLKEKAVPIPEASSFFIFSPTNKIRVLCHRIVNATWFTNFILLFILLSSAALAAEDPIRADSMRNQILEYFDYVFTAVFTVEIVLKMTTYGAFLHKGSFCRNYFNILDLLVVAVSLISMGLESSAISVVKILRVLRVLRPLRAINRAKGLKHVVQCVFVAIRTIGNIVLVTTLLQFMFACIGVQLFKGKFYSCNDLSKMTEEECRGYYYIYKDGDPTQIELRPRQWIHNDFHFDNVLSAMMSLFTVSTFEGWPQLLYKAIDSNEEDTGPVYNNRVEMAIFFIIYIILIAFFMMNIFVGFVIVTFQEQGETEYKNCELDKNQRQCVQYALKARPLRCYIPKNPYQYQVWYVVTSSYFEYLMFALIMLNTICLGMQHYNQSEQMNHISDILNVAFTIIFTLEMVLKLIAFKPRGYFGDPWNVFDFLIVIGSIIDVILSEIDTFLASSGGLYCLGGGCGNVDPDESARISSAFFRLFRVMRLVKLLNRAEGVRTLLWTFIKSFQALPYVALLIVMLFFIYAVIGMQMFGKIAMVDGTQINRNNNFQTFPQAVLLLFRCATGEAWQEILLACSYGKLCDPESDYAPGEEHTCGTNFAYYYFISFYMLCAFLIINLFVAVIMDNFDYLTRDWSILGPHHLDEFKAIWAEYDPEAKGRIKHLDVVTLLRRIQPPLGFGKFCPHRVACKRLVGMNMPLNSDGTVTFNATLFALVRTALKIKTEGNFEQANEELRAIIKKIWKRTSMKLLDQVIPPIGDDEVTVGKFYATFLIQEHFRKFMKRQEEYYGYRPKKDTVQIQAGLRTIEEEAAPEIHRAISGDLTAEEELERAMVEAAMEEGIFRRTGGLFGQVDNFLERTNSLPPVMANQRPLQFAEIEMEELESPVFLEDFPQNPGTHPLARANTNNANANVAYGNSSHRNNPVFSSICYEREFLGEADMPVTREGPLSQPCRASGPHSRSHVDKLKRPMTQRGMPEGQVPPSPCQVTGAKAEHPVQKEGKGPTSRFLETPNSRNFEEHVPRNSAHRCTAPATAMLIQEALVRGGLDSLAADANFVMATGQALADACQMEPEEVEVAATELLKQESPEGGAVPWEP</sequence>
<dbReference type="EMBL" id="L06234">
    <property type="protein sequence ID" value="AAB59700.1"/>
    <property type="status" value="ALT_TERM"/>
    <property type="molecule type" value="mRNA"/>
</dbReference>
<dbReference type="EMBL" id="AK143541">
    <property type="protein sequence ID" value="BAE25427.1"/>
    <property type="molecule type" value="mRNA"/>
</dbReference>
<dbReference type="EMBL" id="GL456086">
    <property type="status" value="NOT_ANNOTATED_CDS"/>
    <property type="molecule type" value="Genomic_DNA"/>
</dbReference>
<dbReference type="EMBL" id="M57968">
    <property type="protein sequence ID" value="AAA03684.1"/>
    <property type="molecule type" value="mRNA"/>
</dbReference>
<dbReference type="EMBL" id="M57976">
    <property type="protein sequence ID" value="AAA63290.1"/>
    <property type="molecule type" value="mRNA"/>
</dbReference>
<dbReference type="CCDS" id="CCDS35724.1">
    <molecule id="Q02789-1"/>
</dbReference>
<dbReference type="CCDS" id="CCDS48380.1">
    <molecule id="Q02789-3"/>
</dbReference>
<dbReference type="PIR" id="A45099">
    <property type="entry name" value="A45099"/>
</dbReference>
<dbReference type="RefSeq" id="NP_001074492.1">
    <molecule id="Q02789-1"/>
    <property type="nucleotide sequence ID" value="NM_001081023.3"/>
</dbReference>
<dbReference type="RefSeq" id="NP_055008.2">
    <molecule id="Q02789-3"/>
    <property type="nucleotide sequence ID" value="NM_014193.2"/>
</dbReference>
<dbReference type="PDB" id="4ZW2">
    <property type="method" value="X-ray"/>
    <property type="resolution" value="1.86 A"/>
    <property type="chains" value="B=357-374"/>
</dbReference>
<dbReference type="PDBsum" id="4ZW2"/>
<dbReference type="SMR" id="Q02789"/>
<dbReference type="ComplexPortal" id="CPX-3191">
    <property type="entry name" value="Cav1.1 voltage-gated calcium channel complex, CACNA2D1-CACNB1-CACNG1 variant"/>
</dbReference>
<dbReference type="FunCoup" id="Q02789">
    <property type="interactions" value="800"/>
</dbReference>
<dbReference type="STRING" id="10090.ENSMUSP00000107695"/>
<dbReference type="BindingDB" id="Q02789"/>
<dbReference type="ChEMBL" id="CHEMBL3988632"/>
<dbReference type="GlyCosmos" id="Q02789">
    <property type="glycosylation" value="3 sites, No reported glycans"/>
</dbReference>
<dbReference type="GlyGen" id="Q02789">
    <property type="glycosylation" value="4 sites"/>
</dbReference>
<dbReference type="iPTMnet" id="Q02789"/>
<dbReference type="PhosphoSitePlus" id="Q02789"/>
<dbReference type="jPOST" id="Q02789"/>
<dbReference type="PaxDb" id="10090-ENSMUSP00000107699"/>
<dbReference type="ProteomicsDB" id="273824">
    <molecule id="Q02789-1"/>
</dbReference>
<dbReference type="ProteomicsDB" id="273825">
    <molecule id="Q02789-2"/>
</dbReference>
<dbReference type="ProteomicsDB" id="349659"/>
<dbReference type="ProteomicsDB" id="359911"/>
<dbReference type="ProteomicsDB" id="361179"/>
<dbReference type="Antibodypedia" id="4015">
    <property type="antibodies" value="181 antibodies from 32 providers"/>
</dbReference>
<dbReference type="DNASU" id="12292"/>
<dbReference type="Ensembl" id="ENSMUST00000112064.8">
    <molecule id="Q02789-1"/>
    <property type="protein sequence ID" value="ENSMUSP00000107695.2"/>
    <property type="gene ID" value="ENSMUSG00000026407.18"/>
</dbReference>
<dbReference type="Ensembl" id="ENSMUST00000112068.10">
    <molecule id="Q02789-3"/>
    <property type="protein sequence ID" value="ENSMUSP00000107699.4"/>
    <property type="gene ID" value="ENSMUSG00000026407.18"/>
</dbReference>
<dbReference type="GeneID" id="12292"/>
<dbReference type="KEGG" id="mmu:12292"/>
<dbReference type="AGR" id="MGI:88294"/>
<dbReference type="CTD" id="779"/>
<dbReference type="MGI" id="MGI:88294">
    <property type="gene designation" value="Cacna1s"/>
</dbReference>
<dbReference type="VEuPathDB" id="HostDB:ENSMUSG00000026407"/>
<dbReference type="eggNOG" id="KOG2301">
    <property type="taxonomic scope" value="Eukaryota"/>
</dbReference>
<dbReference type="GeneTree" id="ENSGT00940000158289"/>
<dbReference type="HOGENOM" id="CLU_000540_0_1_1"/>
<dbReference type="InParanoid" id="Q02789"/>
<dbReference type="OMA" id="WFENLED"/>
<dbReference type="OrthoDB" id="431720at2759"/>
<dbReference type="PhylomeDB" id="Q02789"/>
<dbReference type="TreeFam" id="TF312805"/>
<dbReference type="BioGRID-ORCS" id="12292">
    <property type="hits" value="1 hit in 78 CRISPR screens"/>
</dbReference>
<dbReference type="ChiTaRS" id="Cacna1s">
    <property type="organism name" value="mouse"/>
</dbReference>
<dbReference type="EvolutionaryTrace" id="Q02789"/>
<dbReference type="PRO" id="PR:Q02789"/>
<dbReference type="Proteomes" id="UP000000589">
    <property type="component" value="Chromosome 1"/>
</dbReference>
<dbReference type="RNAct" id="Q02789">
    <property type="molecule type" value="protein"/>
</dbReference>
<dbReference type="Bgee" id="ENSMUSG00000026407">
    <property type="expression patterns" value="Expressed in hindlimb stylopod muscle and 100 other cell types or tissues"/>
</dbReference>
<dbReference type="GO" id="GO:0031674">
    <property type="term" value="C:I band"/>
    <property type="evidence" value="ECO:0007669"/>
    <property type="project" value="Ensembl"/>
</dbReference>
<dbReference type="GO" id="GO:1990454">
    <property type="term" value="C:L-type voltage-gated calcium channel complex"/>
    <property type="evidence" value="ECO:0000250"/>
    <property type="project" value="UniProtKB"/>
</dbReference>
<dbReference type="GO" id="GO:0016529">
    <property type="term" value="C:sarcoplasmic reticulum"/>
    <property type="evidence" value="ECO:0000314"/>
    <property type="project" value="MGI"/>
</dbReference>
<dbReference type="GO" id="GO:0030315">
    <property type="term" value="C:T-tubule"/>
    <property type="evidence" value="ECO:0000314"/>
    <property type="project" value="MGI"/>
</dbReference>
<dbReference type="GO" id="GO:0005516">
    <property type="term" value="F:calmodulin binding"/>
    <property type="evidence" value="ECO:0007669"/>
    <property type="project" value="UniProtKB-KW"/>
</dbReference>
<dbReference type="GO" id="GO:0008331">
    <property type="term" value="F:high voltage-gated calcium channel activity"/>
    <property type="evidence" value="ECO:0007669"/>
    <property type="project" value="Ensembl"/>
</dbReference>
<dbReference type="GO" id="GO:0046872">
    <property type="term" value="F:metal ion binding"/>
    <property type="evidence" value="ECO:0007669"/>
    <property type="project" value="UniProtKB-KW"/>
</dbReference>
<dbReference type="GO" id="GO:0005245">
    <property type="term" value="F:voltage-gated calcium channel activity"/>
    <property type="evidence" value="ECO:0000314"/>
    <property type="project" value="MGI"/>
</dbReference>
<dbReference type="GO" id="GO:0070588">
    <property type="term" value="P:calcium ion transmembrane transport"/>
    <property type="evidence" value="ECO:0000303"/>
    <property type="project" value="ComplexPortal"/>
</dbReference>
<dbReference type="GO" id="GO:0006816">
    <property type="term" value="P:calcium ion transport"/>
    <property type="evidence" value="ECO:0000314"/>
    <property type="project" value="MGI"/>
</dbReference>
<dbReference type="GO" id="GO:0071313">
    <property type="term" value="P:cellular response to caffeine"/>
    <property type="evidence" value="ECO:0000250"/>
    <property type="project" value="UniProtKB"/>
</dbReference>
<dbReference type="GO" id="GO:0007029">
    <property type="term" value="P:endoplasmic reticulum organization"/>
    <property type="evidence" value="ECO:0000315"/>
    <property type="project" value="MGI"/>
</dbReference>
<dbReference type="GO" id="GO:0002074">
    <property type="term" value="P:extraocular skeletal muscle development"/>
    <property type="evidence" value="ECO:0000315"/>
    <property type="project" value="MGI"/>
</dbReference>
<dbReference type="GO" id="GO:0055001">
    <property type="term" value="P:muscle cell development"/>
    <property type="evidence" value="ECO:0000315"/>
    <property type="project" value="MGI"/>
</dbReference>
<dbReference type="GO" id="GO:0006936">
    <property type="term" value="P:muscle contraction"/>
    <property type="evidence" value="ECO:0000314"/>
    <property type="project" value="MGI"/>
</dbReference>
<dbReference type="GO" id="GO:0007520">
    <property type="term" value="P:myoblast fusion"/>
    <property type="evidence" value="ECO:0000315"/>
    <property type="project" value="MGI"/>
</dbReference>
<dbReference type="GO" id="GO:0007528">
    <property type="term" value="P:neuromuscular junction development"/>
    <property type="evidence" value="ECO:0000315"/>
    <property type="project" value="MGI"/>
</dbReference>
<dbReference type="GO" id="GO:0045933">
    <property type="term" value="P:positive regulation of muscle contraction"/>
    <property type="evidence" value="ECO:0000303"/>
    <property type="project" value="ComplexPortal"/>
</dbReference>
<dbReference type="GO" id="GO:0051209">
    <property type="term" value="P:release of sequestered calcium ion into cytosol"/>
    <property type="evidence" value="ECO:0000250"/>
    <property type="project" value="UniProtKB"/>
</dbReference>
<dbReference type="GO" id="GO:0043501">
    <property type="term" value="P:skeletal muscle adaptation"/>
    <property type="evidence" value="ECO:0000315"/>
    <property type="project" value="MGI"/>
</dbReference>
<dbReference type="GO" id="GO:0048741">
    <property type="term" value="P:skeletal muscle fiber development"/>
    <property type="evidence" value="ECO:0000314"/>
    <property type="project" value="MGI"/>
</dbReference>
<dbReference type="GO" id="GO:0007519">
    <property type="term" value="P:skeletal muscle tissue development"/>
    <property type="evidence" value="ECO:0000315"/>
    <property type="project" value="MGI"/>
</dbReference>
<dbReference type="GO" id="GO:0001501">
    <property type="term" value="P:skeletal system development"/>
    <property type="evidence" value="ECO:0000315"/>
    <property type="project" value="MGI"/>
</dbReference>
<dbReference type="GO" id="GO:0006941">
    <property type="term" value="P:striated muscle contraction"/>
    <property type="evidence" value="ECO:0000315"/>
    <property type="project" value="MGI"/>
</dbReference>
<dbReference type="FunFam" id="1.10.287.70:FF:000007">
    <property type="entry name" value="Voltage-dependent L-type calcium channel subunit alpha"/>
    <property type="match status" value="1"/>
</dbReference>
<dbReference type="FunFam" id="1.10.287.70:FF:000009">
    <property type="entry name" value="Voltage-dependent L-type calcium channel subunit alpha"/>
    <property type="match status" value="1"/>
</dbReference>
<dbReference type="FunFam" id="1.10.287.70:FF:000021">
    <property type="entry name" value="Voltage-dependent L-type calcium channel subunit alpha"/>
    <property type="match status" value="1"/>
</dbReference>
<dbReference type="FunFam" id="1.20.120.350:FF:000001">
    <property type="entry name" value="Voltage-dependent L-type calcium channel subunit alpha"/>
    <property type="match status" value="1"/>
</dbReference>
<dbReference type="FunFam" id="1.20.120.350:FF:000006">
    <property type="entry name" value="Voltage-dependent L-type calcium channel subunit alpha"/>
    <property type="match status" value="1"/>
</dbReference>
<dbReference type="FunFam" id="1.20.120.350:FF:000010">
    <property type="entry name" value="Voltage-dependent L-type calcium channel subunit alpha"/>
    <property type="match status" value="1"/>
</dbReference>
<dbReference type="FunFam" id="1.20.120.350:FF:000040">
    <property type="entry name" value="Voltage-dependent L-type calcium channel subunit alpha"/>
    <property type="match status" value="1"/>
</dbReference>
<dbReference type="FunFam" id="1.10.238.10:FF:000063">
    <property type="entry name" value="Voltage-dependent N-type calcium channel subunit alpha"/>
    <property type="match status" value="1"/>
</dbReference>
<dbReference type="Gene3D" id="1.10.287.70">
    <property type="match status" value="4"/>
</dbReference>
<dbReference type="Gene3D" id="6.10.250.2180">
    <property type="match status" value="1"/>
</dbReference>
<dbReference type="Gene3D" id="6.10.250.2500">
    <property type="match status" value="1"/>
</dbReference>
<dbReference type="Gene3D" id="1.20.120.350">
    <property type="entry name" value="Voltage-gated potassium channels. Chain C"/>
    <property type="match status" value="4"/>
</dbReference>
<dbReference type="InterPro" id="IPR031688">
    <property type="entry name" value="CAC1F_C"/>
</dbReference>
<dbReference type="InterPro" id="IPR031649">
    <property type="entry name" value="GPHH_dom"/>
</dbReference>
<dbReference type="InterPro" id="IPR005821">
    <property type="entry name" value="Ion_trans_dom"/>
</dbReference>
<dbReference type="InterPro" id="IPR014873">
    <property type="entry name" value="VDCC_a1su_IQ"/>
</dbReference>
<dbReference type="InterPro" id="IPR050599">
    <property type="entry name" value="VDCC_alpha-1_subunit"/>
</dbReference>
<dbReference type="InterPro" id="IPR005450">
    <property type="entry name" value="VDCC_L_a1ssu"/>
</dbReference>
<dbReference type="InterPro" id="IPR005446">
    <property type="entry name" value="VDCC_L_a1su"/>
</dbReference>
<dbReference type="InterPro" id="IPR002077">
    <property type="entry name" value="VDCCAlpha1"/>
</dbReference>
<dbReference type="InterPro" id="IPR027359">
    <property type="entry name" value="Volt_channel_dom_sf"/>
</dbReference>
<dbReference type="PANTHER" id="PTHR45628">
    <property type="entry name" value="VOLTAGE-DEPENDENT CALCIUM CHANNEL TYPE A SUBUNIT ALPHA-1"/>
    <property type="match status" value="1"/>
</dbReference>
<dbReference type="PANTHER" id="PTHR45628:SF9">
    <property type="entry name" value="VOLTAGE-DEPENDENT L-TYPE CALCIUM CHANNEL SUBUNIT ALPHA-1S"/>
    <property type="match status" value="1"/>
</dbReference>
<dbReference type="Pfam" id="PF08763">
    <property type="entry name" value="Ca_chan_IQ"/>
    <property type="match status" value="1"/>
</dbReference>
<dbReference type="Pfam" id="PF16885">
    <property type="entry name" value="CAC1F_C"/>
    <property type="match status" value="1"/>
</dbReference>
<dbReference type="Pfam" id="PF16905">
    <property type="entry name" value="GPHH"/>
    <property type="match status" value="1"/>
</dbReference>
<dbReference type="Pfam" id="PF00520">
    <property type="entry name" value="Ion_trans"/>
    <property type="match status" value="4"/>
</dbReference>
<dbReference type="PRINTS" id="PR00167">
    <property type="entry name" value="CACHANNEL"/>
</dbReference>
<dbReference type="PRINTS" id="PR01630">
    <property type="entry name" value="LVDCCALPHA1"/>
</dbReference>
<dbReference type="PRINTS" id="PR01634">
    <property type="entry name" value="LVDCCALPHA1S"/>
</dbReference>
<dbReference type="SMART" id="SM01062">
    <property type="entry name" value="Ca_chan_IQ"/>
    <property type="match status" value="1"/>
</dbReference>
<dbReference type="SUPFAM" id="SSF81324">
    <property type="entry name" value="Voltage-gated potassium channels"/>
    <property type="match status" value="4"/>
</dbReference>
<keyword id="KW-0002">3D-structure</keyword>
<keyword id="KW-0025">Alternative splicing</keyword>
<keyword id="KW-0106">Calcium</keyword>
<keyword id="KW-0107">Calcium channel</keyword>
<keyword id="KW-0109">Calcium transport</keyword>
<keyword id="KW-0112">Calmodulin-binding</keyword>
<keyword id="KW-1003">Cell membrane</keyword>
<keyword id="KW-1015">Disulfide bond</keyword>
<keyword id="KW-0325">Glycoprotein</keyword>
<keyword id="KW-0407">Ion channel</keyword>
<keyword id="KW-0406">Ion transport</keyword>
<keyword id="KW-0472">Membrane</keyword>
<keyword id="KW-0479">Metal-binding</keyword>
<keyword id="KW-0597">Phosphoprotein</keyword>
<keyword id="KW-1185">Reference proteome</keyword>
<keyword id="KW-0677">Repeat</keyword>
<keyword id="KW-0812">Transmembrane</keyword>
<keyword id="KW-1133">Transmembrane helix</keyword>
<keyword id="KW-0813">Transport</keyword>
<keyword id="KW-0851">Voltage-gated channel</keyword>
<evidence type="ECO:0000250" key="1"/>
<evidence type="ECO:0000250" key="2">
    <source>
        <dbReference type="UniProtKB" id="P07293"/>
    </source>
</evidence>
<evidence type="ECO:0000250" key="3">
    <source>
        <dbReference type="UniProtKB" id="Q02485"/>
    </source>
</evidence>
<evidence type="ECO:0000250" key="4">
    <source>
        <dbReference type="UniProtKB" id="Q13698"/>
    </source>
</evidence>
<evidence type="ECO:0000255" key="5"/>
<evidence type="ECO:0000256" key="6">
    <source>
        <dbReference type="SAM" id="MobiDB-lite"/>
    </source>
</evidence>
<evidence type="ECO:0000269" key="7">
    <source>
    </source>
</evidence>
<evidence type="ECO:0000269" key="8">
    <source>
    </source>
</evidence>
<evidence type="ECO:0000269" key="9">
    <source>
    </source>
</evidence>
<evidence type="ECO:0000269" key="10">
    <source>
    </source>
</evidence>
<evidence type="ECO:0000269" key="11">
    <source>
    </source>
</evidence>
<evidence type="ECO:0000269" key="12">
    <source>
    </source>
</evidence>
<evidence type="ECO:0000303" key="13">
    <source>
    </source>
</evidence>
<evidence type="ECO:0000303" key="14">
    <source>
    </source>
</evidence>
<evidence type="ECO:0000303" key="15">
    <source>
    </source>
</evidence>
<evidence type="ECO:0000303" key="16">
    <source>
    </source>
</evidence>
<evidence type="ECO:0000303" key="17">
    <source>
    </source>
</evidence>
<evidence type="ECO:0000305" key="18"/>
<evidence type="ECO:0007744" key="19">
    <source>
        <dbReference type="PDB" id="4ZW2"/>
    </source>
</evidence>
<evidence type="ECO:0007744" key="20">
    <source>
    </source>
</evidence>
<evidence type="ECO:0007829" key="21">
    <source>
        <dbReference type="PDB" id="4ZW2"/>
    </source>
</evidence>
<organism>
    <name type="scientific">Mus musculus</name>
    <name type="common">Mouse</name>
    <dbReference type="NCBI Taxonomy" id="10090"/>
    <lineage>
        <taxon>Eukaryota</taxon>
        <taxon>Metazoa</taxon>
        <taxon>Chordata</taxon>
        <taxon>Craniata</taxon>
        <taxon>Vertebrata</taxon>
        <taxon>Euteleostomi</taxon>
        <taxon>Mammalia</taxon>
        <taxon>Eutheria</taxon>
        <taxon>Euarchontoglires</taxon>
        <taxon>Glires</taxon>
        <taxon>Rodentia</taxon>
        <taxon>Myomorpha</taxon>
        <taxon>Muroidea</taxon>
        <taxon>Muridae</taxon>
        <taxon>Murinae</taxon>
        <taxon>Mus</taxon>
        <taxon>Mus</taxon>
    </lineage>
</organism>